<feature type="signal peptide" evidence="2">
    <location>
        <begin position="1"/>
        <end position="23"/>
    </location>
</feature>
<feature type="chain" id="PRO_0000039336" description="Fusion glycoprotein F0">
    <location>
        <begin position="24"/>
        <end position="551"/>
    </location>
</feature>
<feature type="chain" id="PRO_0000039337" description="Fusion glycoprotein F2">
    <location>
        <begin position="24"/>
        <end position="106"/>
    </location>
</feature>
<feature type="chain" id="PRO_0000039338" description="Fusion glycoprotein F1">
    <location>
        <begin position="107"/>
        <end position="551"/>
    </location>
</feature>
<feature type="topological domain" description="Extracellular" evidence="1">
    <location>
        <begin position="24"/>
        <end position="492"/>
    </location>
</feature>
<feature type="transmembrane region" description="Helical" evidence="1">
    <location>
        <begin position="493"/>
        <end position="513"/>
    </location>
</feature>
<feature type="topological domain" description="Cytoplasmic" evidence="1">
    <location>
        <begin position="514"/>
        <end position="551"/>
    </location>
</feature>
<feature type="region of interest" description="Fusion peptide" evidence="1">
    <location>
        <begin position="107"/>
        <end position="131"/>
    </location>
</feature>
<feature type="coiled-coil region" evidence="2">
    <location>
        <begin position="132"/>
        <end position="160"/>
    </location>
</feature>
<feature type="coiled-coil region" evidence="2">
    <location>
        <begin position="456"/>
        <end position="481"/>
    </location>
</feature>
<feature type="site" description="Cleavage; by host" evidence="1">
    <location>
        <begin position="106"/>
        <end position="107"/>
    </location>
</feature>
<feature type="glycosylation site" description="N-linked (GlcNAc...) asparagine; by host" evidence="2">
    <location>
        <position position="65"/>
    </location>
</feature>
<feature type="glycosylation site" description="N-linked (GlcNAc...) asparagine; by host" evidence="2">
    <location>
        <position position="69"/>
    </location>
</feature>
<feature type="glycosylation site" description="N-linked (GlcNAc...) asparagine; by host" evidence="2">
    <location>
        <position position="77"/>
    </location>
</feature>
<feature type="glycosylation site" description="N-linked (GlcNAc...) asparagine; by host" evidence="2">
    <location>
        <position position="90"/>
    </location>
</feature>
<feature type="glycosylation site" description="N-linked (GlcNAc...) asparagine; by host" evidence="2">
    <location>
        <position position="431"/>
    </location>
</feature>
<feature type="glycosylation site" description="N-linked (GlcNAc...) asparagine; by host" evidence="2">
    <location>
        <position position="461"/>
    </location>
</feature>
<feature type="disulfide bond" description="Interchain (between F2 and F1 chains)" evidence="1">
    <location>
        <begin position="68"/>
        <end position="189"/>
    </location>
</feature>
<feature type="disulfide bond" evidence="1">
    <location>
        <begin position="328"/>
        <end position="337"/>
    </location>
</feature>
<feature type="disulfide bond" evidence="1">
    <location>
        <begin position="352"/>
        <end position="360"/>
    </location>
</feature>
<feature type="disulfide bond" evidence="1">
    <location>
        <begin position="384"/>
        <end position="389"/>
    </location>
</feature>
<feature type="disulfide bond" evidence="1">
    <location>
        <begin position="391"/>
        <end position="414"/>
    </location>
</feature>
<reference key="1">
    <citation type="journal article" date="1991" name="J. Gen. Virol.">
        <title>Molecular cloning and sequence analysis of human parainfluenza type 2 virus mRNA encoding the fusion glycoprotein.</title>
        <authorList>
            <person name="Varsanyi T.M."/>
            <person name="Koevamees J."/>
            <person name="Norrby E."/>
        </authorList>
    </citation>
    <scope>NUCLEOTIDE SEQUENCE</scope>
</reference>
<sequence>MHHLHPMIVCIFVMYTGIVGSDAIAGDQLLNIGVIQSKIRSLMYYTDGGASFIVVKLLPNLPPSNGTCNITSLDAYNVTLFKLLTPLIENLSKISTVTDTKTRQKRFAGVVVGLAALGVATAAQITAAVAIVKANANAAAINNLASSIQSTNKAVSDVIDASRTIATAVQAIQDHINGAIVNGITSASCRAHDALIGSILNLYLTELTTIFHNQITNPALTPLSIQALRILLGSTLPIVIESKLNTNLNTAELLSSGLLTGQIISISPMYMQMLIQINVPTFIMQPGAKVIDLIAISANHKLQEVVVQVPNRILEYANELQNYPANDCVVTPNSVCCRYNEGSPIPESQYQCLRGNLNSCTFTPIIGNFLKRFAFANGVLYANCKSLLCRCADPPHVVSQDDTQGISIIDIKRCSEMMLDTFSFRITSTFNATYVTDFSMINANIVHLSPLDLSNQINSINKSLKSAEDWIADSNFFANQARTAKTLYSLSAIALILSVITLVVVGLLIAYIIKLVSQIHQFRSLAATTMFHRENPAFFSKNNHGNIYGIS</sequence>
<protein>
    <recommendedName>
        <fullName>Fusion glycoprotein F0</fullName>
    </recommendedName>
    <component>
        <recommendedName>
            <fullName>Fusion glycoprotein F2</fullName>
        </recommendedName>
    </component>
    <component>
        <recommendedName>
            <fullName>Fusion glycoprotein F1</fullName>
        </recommendedName>
    </component>
</protein>
<accession>P27286</accession>
<comment type="function">
    <text evidence="1">Class I viral fusion protein. Under the current model, the protein has at least 3 conformational states: pre-fusion native state, pre-hairpin intermediate state, and post-fusion hairpin state. During viral and plasma cell membrane fusion, the heptad repeat (HR) regions assume a trimer-of-hairpins structure, positioning the fusion peptide in close proximity to the C-terminal region of the ectodomain. The formation of this structure appears to drive apposition and subsequent fusion of viral and plasma cell membranes. Directs fusion of viral and cellular membranes leading to delivery of the nucleocapsid into the cytoplasm. This fusion is pH independent and occurs directly at the outer cell membrane. The trimer of F1-F2 (F protein) probably interacts with HN at the virion surface. Upon HN binding to its cellular receptor, the hydrophobic fusion peptide is unmasked and interacts with the cellular membrane, inducing the fusion between cell and virion membranes. Later in infection, F proteins expressed at the plasma membrane of infected cells could mediate fusion with adjacent cells to form syncytia, a cytopathic effect that could lead to tissue necrosis (By similarity).</text>
</comment>
<comment type="subunit">
    <text evidence="1">Homotrimer of disulfide-linked F1-F2.</text>
</comment>
<comment type="subcellular location">
    <subcellularLocation>
        <location evidence="1">Virion membrane</location>
        <topology evidence="1">Single-pass type I membrane protein</topology>
    </subcellularLocation>
    <subcellularLocation>
        <location evidence="1">Host cell membrane</location>
        <topology evidence="1">Single-pass membrane protein</topology>
    </subcellularLocation>
</comment>
<comment type="PTM">
    <text evidence="1">The inactive precursor F0 is glycosylated and proteolytically cleaved into F1 and F2 to be functionally active. The cleavage is mediated by cellular proteases during the transport and maturation of the polypeptide (By similarity).</text>
</comment>
<comment type="similarity">
    <text evidence="3">Belongs to the paramyxoviruses fusion glycoprotein family.</text>
</comment>
<organism>
    <name type="scientific">Human parainfluenza 2 virus (strain Greer)</name>
    <name type="common">HPIV-2</name>
    <dbReference type="NCBI Taxonomy" id="11213"/>
    <lineage>
        <taxon>Viruses</taxon>
        <taxon>Riboviria</taxon>
        <taxon>Orthornavirae</taxon>
        <taxon>Negarnaviricota</taxon>
        <taxon>Haploviricotina</taxon>
        <taxon>Monjiviricetes</taxon>
        <taxon>Mononegavirales</taxon>
        <taxon>Paramyxoviridae</taxon>
        <taxon>Rubulavirinae</taxon>
        <taxon>Orthorubulavirus</taxon>
        <taxon>Orthorubulavirus laryngotracheitidis</taxon>
        <taxon>Human parainfluenza 2 virus</taxon>
    </lineage>
</organism>
<organismHost>
    <name type="scientific">Homo sapiens</name>
    <name type="common">Human</name>
    <dbReference type="NCBI Taxonomy" id="9606"/>
</organismHost>
<name>FUS_PI2HG</name>
<proteinExistence type="inferred from homology"/>
<keyword id="KW-0165">Cleavage on pair of basic residues</keyword>
<keyword id="KW-0175">Coiled coil</keyword>
<keyword id="KW-1015">Disulfide bond</keyword>
<keyword id="KW-1169">Fusion of virus membrane with host cell membrane</keyword>
<keyword id="KW-1168">Fusion of virus membrane with host membrane</keyword>
<keyword id="KW-0325">Glycoprotein</keyword>
<keyword id="KW-1032">Host cell membrane</keyword>
<keyword id="KW-1043">Host membrane</keyword>
<keyword id="KW-0472">Membrane</keyword>
<keyword id="KW-0732">Signal</keyword>
<keyword id="KW-0812">Transmembrane</keyword>
<keyword id="KW-1133">Transmembrane helix</keyword>
<keyword id="KW-0261">Viral envelope protein</keyword>
<keyword id="KW-1162">Viral penetration into host cytoplasm</keyword>
<keyword id="KW-0946">Virion</keyword>
<keyword id="KW-1160">Virus entry into host cell</keyword>
<dbReference type="PIR" id="A38509">
    <property type="entry name" value="VGNZPG"/>
</dbReference>
<dbReference type="SMR" id="P27286"/>
<dbReference type="GlyCosmos" id="P27286">
    <property type="glycosylation" value="6 sites, No reported glycans"/>
</dbReference>
<dbReference type="GO" id="GO:0020002">
    <property type="term" value="C:host cell plasma membrane"/>
    <property type="evidence" value="ECO:0007669"/>
    <property type="project" value="UniProtKB-SubCell"/>
</dbReference>
<dbReference type="GO" id="GO:0016020">
    <property type="term" value="C:membrane"/>
    <property type="evidence" value="ECO:0007669"/>
    <property type="project" value="UniProtKB-KW"/>
</dbReference>
<dbReference type="GO" id="GO:0019031">
    <property type="term" value="C:viral envelope"/>
    <property type="evidence" value="ECO:0007669"/>
    <property type="project" value="UniProtKB-KW"/>
</dbReference>
<dbReference type="GO" id="GO:0055036">
    <property type="term" value="C:virion membrane"/>
    <property type="evidence" value="ECO:0007669"/>
    <property type="project" value="UniProtKB-SubCell"/>
</dbReference>
<dbReference type="GO" id="GO:0019064">
    <property type="term" value="P:fusion of virus membrane with host plasma membrane"/>
    <property type="evidence" value="ECO:0007669"/>
    <property type="project" value="UniProtKB-KW"/>
</dbReference>
<dbReference type="GO" id="GO:0046718">
    <property type="term" value="P:symbiont entry into host cell"/>
    <property type="evidence" value="ECO:0007669"/>
    <property type="project" value="UniProtKB-KW"/>
</dbReference>
<dbReference type="Gene3D" id="1.20.5.300">
    <property type="match status" value="1"/>
</dbReference>
<dbReference type="Gene3D" id="6.10.10.110">
    <property type="match status" value="1"/>
</dbReference>
<dbReference type="Gene3D" id="2.60.40.1690">
    <property type="entry name" value="Head and neck region of the ectodomain of NDV fusion glycoprotein"/>
    <property type="match status" value="1"/>
</dbReference>
<dbReference type="Gene3D" id="2.40.490.10">
    <property type="entry name" value="Newcastle disease virus like domain"/>
    <property type="match status" value="1"/>
</dbReference>
<dbReference type="InterPro" id="IPR000776">
    <property type="entry name" value="Fusion_F0_Paramyxovir"/>
</dbReference>
<dbReference type="Pfam" id="PF00523">
    <property type="entry name" value="Fusion_gly"/>
    <property type="match status" value="1"/>
</dbReference>
<dbReference type="SUPFAM" id="SSF69922">
    <property type="entry name" value="Head and neck region of the ectodomain of NDV fusion glycoprotein"/>
    <property type="match status" value="1"/>
</dbReference>
<dbReference type="SUPFAM" id="SSF58069">
    <property type="entry name" value="Virus ectodomain"/>
    <property type="match status" value="1"/>
</dbReference>
<evidence type="ECO:0000250" key="1"/>
<evidence type="ECO:0000255" key="2"/>
<evidence type="ECO:0000305" key="3"/>
<gene>
    <name type="primary">F</name>
</gene>